<accession>P08446</accession>
<organism>
    <name type="scientific">Synechococcus sp. (strain ATCC 27144 / PCC 6301 / SAUG 1402/1)</name>
    <name type="common">Anacystis nidulans</name>
    <dbReference type="NCBI Taxonomy" id="269084"/>
    <lineage>
        <taxon>Bacteria</taxon>
        <taxon>Bacillati</taxon>
        <taxon>Cyanobacteriota</taxon>
        <taxon>Cyanophyceae</taxon>
        <taxon>Synechococcales</taxon>
        <taxon>Synechococcaceae</taxon>
        <taxon>Synechococcus</taxon>
    </lineage>
</organism>
<protein>
    <recommendedName>
        <fullName evidence="1">ATP synthase subunit b'</fullName>
    </recommendedName>
    <alternativeName>
        <fullName evidence="1">ATP synthase F(0) sector subunit b'</fullName>
    </alternativeName>
    <alternativeName>
        <fullName evidence="1">ATPase subunit II</fullName>
    </alternativeName>
    <alternativeName>
        <fullName evidence="1">F-type ATPase subunit b'</fullName>
        <shortName evidence="1">F-ATPase subunit b'</shortName>
    </alternativeName>
</protein>
<reference key="1">
    <citation type="journal article" date="1987" name="J. Mol. Biol.">
        <title>The organization and sequence of the genes for ATP synthase subunits in the cyanobacterium Synechococcus 6301. Support for an endosymbiotic origin of chloroplasts.</title>
        <authorList>
            <person name="Cozens A.L."/>
            <person name="Walker J.E."/>
        </authorList>
    </citation>
    <scope>NUCLEOTIDE SEQUENCE [GENOMIC DNA]</scope>
</reference>
<reference key="2">
    <citation type="journal article" date="2007" name="Photosyn. Res.">
        <title>Complete nucleotide sequence of the freshwater unicellular cyanobacterium Synechococcus elongatus PCC 6301 chromosome: gene content and organization.</title>
        <authorList>
            <person name="Sugita C."/>
            <person name="Ogata K."/>
            <person name="Shikata M."/>
            <person name="Jikuya H."/>
            <person name="Takano J."/>
            <person name="Furumichi M."/>
            <person name="Kanehisa M."/>
            <person name="Omata T."/>
            <person name="Sugiura M."/>
            <person name="Sugita M."/>
        </authorList>
    </citation>
    <scope>NUCLEOTIDE SEQUENCE [LARGE SCALE GENOMIC DNA]</scope>
    <source>
        <strain>ATCC 27144 / PCC 6301 / SAUG 1402/1</strain>
    </source>
</reference>
<comment type="function">
    <text evidence="1">F(1)F(0) ATP synthase produces ATP from ADP in the presence of a proton or sodium gradient. F-type ATPases consist of two structural domains, F(1) containing the extramembraneous catalytic core and F(0) containing the membrane proton channel, linked together by a central stalk and a peripheral stalk. During catalysis, ATP synthesis in the catalytic domain of F(1) is coupled via a rotary mechanism of the central stalk subunits to proton translocation.</text>
</comment>
<comment type="function">
    <text evidence="1">Component of the F(0) channel, it forms part of the peripheral stalk, linking F(1) to F(0). The b'-subunit is a diverged and duplicated form of b found in plants and photosynthetic bacteria.</text>
</comment>
<comment type="subunit">
    <text evidence="1">F-type ATPases have 2 components, F(1) - the catalytic core - and F(0) - the membrane proton channel. F(1) has five subunits: alpha(3), beta(3), gamma(1), delta(1), epsilon(1). F(0) has four main subunits: a(1), b(1), b'(1) and c(10-14). The alpha and beta chains form an alternating ring which encloses part of the gamma chain. F(1) is attached to F(0) by a central stalk formed by the gamma and epsilon chains, while a peripheral stalk is formed by the delta, b and b' chains.</text>
</comment>
<comment type="subcellular location">
    <subcellularLocation>
        <location evidence="1">Cellular thylakoid membrane</location>
        <topology evidence="1">Single-pass membrane protein</topology>
    </subcellularLocation>
</comment>
<comment type="similarity">
    <text evidence="1">Belongs to the ATPase B chain family.</text>
</comment>
<gene>
    <name evidence="1" type="primary">atpF2</name>
    <name evidence="1" type="synonym">atpG</name>
    <name type="ordered locus">syc1180_c</name>
</gene>
<proteinExistence type="inferred from homology"/>
<feature type="chain" id="PRO_0000082429" description="ATP synthase subunit b'">
    <location>
        <begin position="1"/>
        <end position="158"/>
    </location>
</feature>
<feature type="transmembrane region" description="Helical" evidence="1">
    <location>
        <begin position="24"/>
        <end position="44"/>
    </location>
</feature>
<sequence>MNAWMILAAEAVQEAEGGLFDLDATLPLMAVQILVLVFLLNAVFYKPFGKVLDDRDQFVRGGRQDAKARLAEVKALTAQYEQELAATRKQSQALIAEAQTEAGRIAAQQLAEAQREAQAQREQAQQEIDQQKAVALQALDQQVDALSHQILDKLLARA</sequence>
<evidence type="ECO:0000255" key="1">
    <source>
        <dbReference type="HAMAP-Rule" id="MF_01399"/>
    </source>
</evidence>
<name>ATPF2_SYNP6</name>
<keyword id="KW-0066">ATP synthesis</keyword>
<keyword id="KW-0138">CF(0)</keyword>
<keyword id="KW-0375">Hydrogen ion transport</keyword>
<keyword id="KW-0406">Ion transport</keyword>
<keyword id="KW-0472">Membrane</keyword>
<keyword id="KW-0793">Thylakoid</keyword>
<keyword id="KW-0812">Transmembrane</keyword>
<keyword id="KW-1133">Transmembrane helix</keyword>
<keyword id="KW-0813">Transport</keyword>
<dbReference type="EMBL" id="X05302">
    <property type="protein sequence ID" value="CAA28925.1"/>
    <property type="molecule type" value="Genomic_DNA"/>
</dbReference>
<dbReference type="EMBL" id="AP008231">
    <property type="protein sequence ID" value="BAD79370.1"/>
    <property type="molecule type" value="Genomic_DNA"/>
</dbReference>
<dbReference type="PIR" id="S10828">
    <property type="entry name" value="LWYCBB"/>
</dbReference>
<dbReference type="RefSeq" id="WP_011243492.1">
    <property type="nucleotide sequence ID" value="NZ_CP085785.1"/>
</dbReference>
<dbReference type="SMR" id="P08446"/>
<dbReference type="KEGG" id="syc:syc1180_c"/>
<dbReference type="eggNOG" id="COG0711">
    <property type="taxonomic scope" value="Bacteria"/>
</dbReference>
<dbReference type="Proteomes" id="UP000001175">
    <property type="component" value="Chromosome"/>
</dbReference>
<dbReference type="GO" id="GO:0031676">
    <property type="term" value="C:plasma membrane-derived thylakoid membrane"/>
    <property type="evidence" value="ECO:0007669"/>
    <property type="project" value="UniProtKB-SubCell"/>
</dbReference>
<dbReference type="GO" id="GO:0045259">
    <property type="term" value="C:proton-transporting ATP synthase complex"/>
    <property type="evidence" value="ECO:0007669"/>
    <property type="project" value="UniProtKB-KW"/>
</dbReference>
<dbReference type="GO" id="GO:0046933">
    <property type="term" value="F:proton-transporting ATP synthase activity, rotational mechanism"/>
    <property type="evidence" value="ECO:0007669"/>
    <property type="project" value="UniProtKB-UniRule"/>
</dbReference>
<dbReference type="GO" id="GO:0046961">
    <property type="term" value="F:proton-transporting ATPase activity, rotational mechanism"/>
    <property type="evidence" value="ECO:0007669"/>
    <property type="project" value="TreeGrafter"/>
</dbReference>
<dbReference type="CDD" id="cd06503">
    <property type="entry name" value="ATP-synt_Fo_b"/>
    <property type="match status" value="1"/>
</dbReference>
<dbReference type="HAMAP" id="MF_01398">
    <property type="entry name" value="ATP_synth_b_bprime"/>
    <property type="match status" value="1"/>
</dbReference>
<dbReference type="HAMAP" id="MF_01399">
    <property type="entry name" value="ATP_synth_bprime"/>
    <property type="match status" value="1"/>
</dbReference>
<dbReference type="InterPro" id="IPR034679">
    <property type="entry name" value="ATP_synth_b"/>
</dbReference>
<dbReference type="InterPro" id="IPR002146">
    <property type="entry name" value="ATP_synth_b/b'su_bac/chlpt"/>
</dbReference>
<dbReference type="InterPro" id="IPR050059">
    <property type="entry name" value="ATP_synthase_B_chain"/>
</dbReference>
<dbReference type="NCBIfam" id="NF005607">
    <property type="entry name" value="PRK07353.1"/>
    <property type="match status" value="1"/>
</dbReference>
<dbReference type="PANTHER" id="PTHR33445">
    <property type="entry name" value="ATP SYNTHASE SUBUNIT B', CHLOROPLASTIC"/>
    <property type="match status" value="1"/>
</dbReference>
<dbReference type="PANTHER" id="PTHR33445:SF2">
    <property type="entry name" value="ATP SYNTHASE SUBUNIT B', CHLOROPLASTIC"/>
    <property type="match status" value="1"/>
</dbReference>
<dbReference type="Pfam" id="PF00430">
    <property type="entry name" value="ATP-synt_B"/>
    <property type="match status" value="1"/>
</dbReference>